<name>BSSR_SHIFL</name>
<organism>
    <name type="scientific">Shigella flexneri</name>
    <dbReference type="NCBI Taxonomy" id="623"/>
    <lineage>
        <taxon>Bacteria</taxon>
        <taxon>Pseudomonadati</taxon>
        <taxon>Pseudomonadota</taxon>
        <taxon>Gammaproteobacteria</taxon>
        <taxon>Enterobacterales</taxon>
        <taxon>Enterobacteriaceae</taxon>
        <taxon>Shigella</taxon>
    </lineage>
</organism>
<evidence type="ECO:0000250" key="1"/>
<reference key="1">
    <citation type="journal article" date="2002" name="Nucleic Acids Res.">
        <title>Genome sequence of Shigella flexneri 2a: insights into pathogenicity through comparison with genomes of Escherichia coli K12 and O157.</title>
        <authorList>
            <person name="Jin Q."/>
            <person name="Yuan Z."/>
            <person name="Xu J."/>
            <person name="Wang Y."/>
            <person name="Shen Y."/>
            <person name="Lu W."/>
            <person name="Wang J."/>
            <person name="Liu H."/>
            <person name="Yang J."/>
            <person name="Yang F."/>
            <person name="Zhang X."/>
            <person name="Zhang J."/>
            <person name="Yang G."/>
            <person name="Wu H."/>
            <person name="Qu D."/>
            <person name="Dong J."/>
            <person name="Sun L."/>
            <person name="Xue Y."/>
            <person name="Zhao A."/>
            <person name="Gao Y."/>
            <person name="Zhu J."/>
            <person name="Kan B."/>
            <person name="Ding K."/>
            <person name="Chen S."/>
            <person name="Cheng H."/>
            <person name="Yao Z."/>
            <person name="He B."/>
            <person name="Chen R."/>
            <person name="Ma D."/>
            <person name="Qiang B."/>
            <person name="Wen Y."/>
            <person name="Hou Y."/>
            <person name="Yu J."/>
        </authorList>
    </citation>
    <scope>NUCLEOTIDE SEQUENCE [LARGE SCALE GENOMIC DNA]</scope>
    <source>
        <strain>301 / Serotype 2a</strain>
    </source>
</reference>
<reference key="2">
    <citation type="journal article" date="2003" name="Infect. Immun.">
        <title>Complete genome sequence and comparative genomics of Shigella flexneri serotype 2a strain 2457T.</title>
        <authorList>
            <person name="Wei J."/>
            <person name="Goldberg M.B."/>
            <person name="Burland V."/>
            <person name="Venkatesan M.M."/>
            <person name="Deng W."/>
            <person name="Fournier G."/>
            <person name="Mayhew G.F."/>
            <person name="Plunkett G. III"/>
            <person name="Rose D.J."/>
            <person name="Darling A."/>
            <person name="Mau B."/>
            <person name="Perna N.T."/>
            <person name="Payne S.M."/>
            <person name="Runyen-Janecky L.J."/>
            <person name="Zhou S."/>
            <person name="Schwartz D.C."/>
            <person name="Blattner F.R."/>
        </authorList>
    </citation>
    <scope>NUCLEOTIDE SEQUENCE [LARGE SCALE GENOMIC DNA]</scope>
    <source>
        <strain>ATCC 700930 / 2457T / Serotype 2a</strain>
    </source>
</reference>
<proteinExistence type="inferred from homology"/>
<gene>
    <name type="primary">bssR</name>
    <name type="ordered locus">SF0786</name>
    <name type="ordered locus">S0829</name>
</gene>
<protein>
    <recommendedName>
        <fullName>Biofilm regulator BssR</fullName>
    </recommendedName>
</protein>
<accession>P0AAY3</accession>
<accession>P75803</accession>
<dbReference type="EMBL" id="AE005674">
    <property type="protein sequence ID" value="AAN42419.1"/>
    <property type="molecule type" value="Genomic_DNA"/>
</dbReference>
<dbReference type="EMBL" id="AE014073">
    <property type="protein sequence ID" value="AAP16295.1"/>
    <property type="molecule type" value="Genomic_DNA"/>
</dbReference>
<dbReference type="RefSeq" id="NP_706712.1">
    <property type="nucleotide sequence ID" value="NC_004337.2"/>
</dbReference>
<dbReference type="RefSeq" id="WP_000497137.1">
    <property type="nucleotide sequence ID" value="NZ_WPGW01000151.1"/>
</dbReference>
<dbReference type="STRING" id="198214.SF0786"/>
<dbReference type="PaxDb" id="198214-SF0786"/>
<dbReference type="GeneID" id="1023773"/>
<dbReference type="GeneID" id="93776586"/>
<dbReference type="KEGG" id="sfl:SF0786"/>
<dbReference type="KEGG" id="sfx:S0829"/>
<dbReference type="PATRIC" id="fig|198214.7.peg.912"/>
<dbReference type="HOGENOM" id="CLU_161265_0_0_6"/>
<dbReference type="Proteomes" id="UP000001006">
    <property type="component" value="Chromosome"/>
</dbReference>
<dbReference type="Proteomes" id="UP000002673">
    <property type="component" value="Chromosome"/>
</dbReference>
<dbReference type="InterPro" id="IPR020359">
    <property type="entry name" value="Biofilm_regulator_BssR"/>
</dbReference>
<dbReference type="NCBIfam" id="NF008959">
    <property type="entry name" value="PRK12302.1"/>
    <property type="match status" value="1"/>
</dbReference>
<dbReference type="Pfam" id="PF10799">
    <property type="entry name" value="YliH"/>
    <property type="match status" value="1"/>
</dbReference>
<sequence length="127" mass="14536">MFVDRQRIDLLNRLIDARVDLAAYVQLRKAKGYMSVSESNHLRDNFFKLNRELHDKSLRLNLHLDQEEWSALHHAEEALATAAVCLMSGHHDCPTVITVNADKLENCLMSLTLSIQSLQKHAMLEKA</sequence>
<comment type="function">
    <text evidence="1">Represses biofilm formation in M9C glu and LB glu media but not in M9C and LB media. Seems to act as a global regulator of several genes involved in catabolite repression and stress response and regulation of the uptake and export of signaling pathways. Could be involved the regulation of indole as well as uptake and export of AI-2 through a cAMP-dependent pathway (By similarity).</text>
</comment>
<feature type="chain" id="PRO_0000168734" description="Biofilm regulator BssR">
    <location>
        <begin position="1"/>
        <end position="127"/>
    </location>
</feature>
<keyword id="KW-1185">Reference proteome</keyword>